<dbReference type="EMBL" id="CP000768">
    <property type="protein sequence ID" value="ABS43751.1"/>
    <property type="molecule type" value="Genomic_DNA"/>
</dbReference>
<dbReference type="SMR" id="A7H643"/>
<dbReference type="KEGG" id="cjd:JJD26997_2068"/>
<dbReference type="HOGENOM" id="CLU_139869_3_0_7"/>
<dbReference type="Proteomes" id="UP000002302">
    <property type="component" value="Chromosome"/>
</dbReference>
<dbReference type="GO" id="GO:0005737">
    <property type="term" value="C:cytoplasm"/>
    <property type="evidence" value="ECO:0007669"/>
    <property type="project" value="UniProtKB-ARBA"/>
</dbReference>
<dbReference type="GO" id="GO:0015935">
    <property type="term" value="C:small ribosomal subunit"/>
    <property type="evidence" value="ECO:0007669"/>
    <property type="project" value="TreeGrafter"/>
</dbReference>
<dbReference type="GO" id="GO:0019843">
    <property type="term" value="F:rRNA binding"/>
    <property type="evidence" value="ECO:0007669"/>
    <property type="project" value="UniProtKB-UniRule"/>
</dbReference>
<dbReference type="GO" id="GO:0003735">
    <property type="term" value="F:structural constituent of ribosome"/>
    <property type="evidence" value="ECO:0007669"/>
    <property type="project" value="InterPro"/>
</dbReference>
<dbReference type="GO" id="GO:0008270">
    <property type="term" value="F:zinc ion binding"/>
    <property type="evidence" value="ECO:0007669"/>
    <property type="project" value="UniProtKB-UniRule"/>
</dbReference>
<dbReference type="GO" id="GO:0006412">
    <property type="term" value="P:translation"/>
    <property type="evidence" value="ECO:0007669"/>
    <property type="project" value="UniProtKB-UniRule"/>
</dbReference>
<dbReference type="FunFam" id="4.10.830.10:FF:000001">
    <property type="entry name" value="30S ribosomal protein S14 type Z"/>
    <property type="match status" value="1"/>
</dbReference>
<dbReference type="Gene3D" id="4.10.830.10">
    <property type="entry name" value="30s Ribosomal Protein S14, Chain N"/>
    <property type="match status" value="1"/>
</dbReference>
<dbReference type="HAMAP" id="MF_01364_B">
    <property type="entry name" value="Ribosomal_uS14_2_B"/>
    <property type="match status" value="1"/>
</dbReference>
<dbReference type="InterPro" id="IPR001209">
    <property type="entry name" value="Ribosomal_uS14"/>
</dbReference>
<dbReference type="InterPro" id="IPR023053">
    <property type="entry name" value="Ribosomal_uS14_bact"/>
</dbReference>
<dbReference type="InterPro" id="IPR018271">
    <property type="entry name" value="Ribosomal_uS14_CS"/>
</dbReference>
<dbReference type="InterPro" id="IPR043140">
    <property type="entry name" value="Ribosomal_uS14_sf"/>
</dbReference>
<dbReference type="NCBIfam" id="NF005974">
    <property type="entry name" value="PRK08061.1"/>
    <property type="match status" value="1"/>
</dbReference>
<dbReference type="PANTHER" id="PTHR19836">
    <property type="entry name" value="30S RIBOSOMAL PROTEIN S14"/>
    <property type="match status" value="1"/>
</dbReference>
<dbReference type="PANTHER" id="PTHR19836:SF19">
    <property type="entry name" value="SMALL RIBOSOMAL SUBUNIT PROTEIN US14M"/>
    <property type="match status" value="1"/>
</dbReference>
<dbReference type="Pfam" id="PF00253">
    <property type="entry name" value="Ribosomal_S14"/>
    <property type="match status" value="1"/>
</dbReference>
<dbReference type="SUPFAM" id="SSF57716">
    <property type="entry name" value="Glucocorticoid receptor-like (DNA-binding domain)"/>
    <property type="match status" value="1"/>
</dbReference>
<dbReference type="PROSITE" id="PS00527">
    <property type="entry name" value="RIBOSOMAL_S14"/>
    <property type="match status" value="1"/>
</dbReference>
<protein>
    <recommendedName>
        <fullName evidence="1">Small ribosomal subunit protein uS14</fullName>
    </recommendedName>
    <alternativeName>
        <fullName evidence="2">30S ribosomal protein S14 type Z</fullName>
    </alternativeName>
</protein>
<comment type="function">
    <text evidence="1">Binds 16S rRNA, required for the assembly of 30S particles and may also be responsible for determining the conformation of the 16S rRNA at the A site.</text>
</comment>
<comment type="cofactor">
    <cofactor evidence="1">
        <name>Zn(2+)</name>
        <dbReference type="ChEBI" id="CHEBI:29105"/>
    </cofactor>
    <text evidence="1">Binds 1 zinc ion per subunit.</text>
</comment>
<comment type="subunit">
    <text evidence="1">Part of the 30S ribosomal subunit. Contacts proteins S3 and S10.</text>
</comment>
<comment type="similarity">
    <text evidence="1">Belongs to the universal ribosomal protein uS14 family. Zinc-binding uS14 subfamily.</text>
</comment>
<organism>
    <name type="scientific">Campylobacter jejuni subsp. doylei (strain ATCC BAA-1458 / RM4099 / 269.97)</name>
    <dbReference type="NCBI Taxonomy" id="360109"/>
    <lineage>
        <taxon>Bacteria</taxon>
        <taxon>Pseudomonadati</taxon>
        <taxon>Campylobacterota</taxon>
        <taxon>Epsilonproteobacteria</taxon>
        <taxon>Campylobacterales</taxon>
        <taxon>Campylobacteraceae</taxon>
        <taxon>Campylobacter</taxon>
    </lineage>
</organism>
<keyword id="KW-0479">Metal-binding</keyword>
<keyword id="KW-0687">Ribonucleoprotein</keyword>
<keyword id="KW-0689">Ribosomal protein</keyword>
<keyword id="KW-0694">RNA-binding</keyword>
<keyword id="KW-0699">rRNA-binding</keyword>
<keyword id="KW-0862">Zinc</keyword>
<evidence type="ECO:0000255" key="1">
    <source>
        <dbReference type="HAMAP-Rule" id="MF_01364"/>
    </source>
</evidence>
<evidence type="ECO:0000305" key="2"/>
<sequence length="61" mass="6956">MAKKSMIAKAARKPKFKVRAYTRCQICGRPHSVYRDFGICRVCLRKMGNEGLIPGLKKASW</sequence>
<proteinExistence type="inferred from homology"/>
<feature type="chain" id="PRO_1000067932" description="Small ribosomal subunit protein uS14">
    <location>
        <begin position="1"/>
        <end position="61"/>
    </location>
</feature>
<feature type="binding site" evidence="1">
    <location>
        <position position="24"/>
    </location>
    <ligand>
        <name>Zn(2+)</name>
        <dbReference type="ChEBI" id="CHEBI:29105"/>
    </ligand>
</feature>
<feature type="binding site" evidence="1">
    <location>
        <position position="27"/>
    </location>
    <ligand>
        <name>Zn(2+)</name>
        <dbReference type="ChEBI" id="CHEBI:29105"/>
    </ligand>
</feature>
<feature type="binding site" evidence="1">
    <location>
        <position position="40"/>
    </location>
    <ligand>
        <name>Zn(2+)</name>
        <dbReference type="ChEBI" id="CHEBI:29105"/>
    </ligand>
</feature>
<feature type="binding site" evidence="1">
    <location>
        <position position="43"/>
    </location>
    <ligand>
        <name>Zn(2+)</name>
        <dbReference type="ChEBI" id="CHEBI:29105"/>
    </ligand>
</feature>
<reference key="1">
    <citation type="submission" date="2007-07" db="EMBL/GenBank/DDBJ databases">
        <title>Complete genome sequence of Campylobacter jejuni subsp doylei 269.97 isolated from human blood.</title>
        <authorList>
            <person name="Fouts D.E."/>
            <person name="Mongodin E.F."/>
            <person name="Puiu D."/>
            <person name="Sebastian Y."/>
            <person name="Miller W.G."/>
            <person name="Mandrell R.E."/>
            <person name="Lastovica A.J."/>
            <person name="Nelson K.E."/>
        </authorList>
    </citation>
    <scope>NUCLEOTIDE SEQUENCE [LARGE SCALE GENOMIC DNA]</scope>
    <source>
        <strain>ATCC BAA-1458 / RM4099 / 269.97</strain>
    </source>
</reference>
<gene>
    <name evidence="1" type="primary">rpsZ</name>
    <name evidence="1" type="synonym">rpsN</name>
    <name type="ordered locus">JJD26997_2068</name>
</gene>
<accession>A7H643</accession>
<name>RS14Z_CAMJD</name>